<organism>
    <name type="scientific">Actinobacillus pleuropneumoniae serotype 5b (strain L20)</name>
    <dbReference type="NCBI Taxonomy" id="416269"/>
    <lineage>
        <taxon>Bacteria</taxon>
        <taxon>Pseudomonadati</taxon>
        <taxon>Pseudomonadota</taxon>
        <taxon>Gammaproteobacteria</taxon>
        <taxon>Pasteurellales</taxon>
        <taxon>Pasteurellaceae</taxon>
        <taxon>Actinobacillus</taxon>
    </lineage>
</organism>
<dbReference type="EMBL" id="CP000569">
    <property type="protein sequence ID" value="ABN74021.1"/>
    <property type="molecule type" value="Genomic_DNA"/>
</dbReference>
<dbReference type="RefSeq" id="WP_009874858.1">
    <property type="nucleotide sequence ID" value="NC_009053.1"/>
</dbReference>
<dbReference type="SMR" id="A3N0T5"/>
<dbReference type="STRING" id="416269.APL_0925"/>
<dbReference type="EnsemblBacteria" id="ABN74021">
    <property type="protein sequence ID" value="ABN74021"/>
    <property type="gene ID" value="APL_0925"/>
</dbReference>
<dbReference type="KEGG" id="apl:APL_0925"/>
<dbReference type="eggNOG" id="COG0443">
    <property type="taxonomic scope" value="Bacteria"/>
</dbReference>
<dbReference type="HOGENOM" id="CLU_005965_2_3_6"/>
<dbReference type="Proteomes" id="UP000001432">
    <property type="component" value="Chromosome"/>
</dbReference>
<dbReference type="GO" id="GO:0005524">
    <property type="term" value="F:ATP binding"/>
    <property type="evidence" value="ECO:0007669"/>
    <property type="project" value="UniProtKB-KW"/>
</dbReference>
<dbReference type="GO" id="GO:0016887">
    <property type="term" value="F:ATP hydrolysis activity"/>
    <property type="evidence" value="ECO:0007669"/>
    <property type="project" value="UniProtKB-UniRule"/>
</dbReference>
<dbReference type="GO" id="GO:0140662">
    <property type="term" value="F:ATP-dependent protein folding chaperone"/>
    <property type="evidence" value="ECO:0007669"/>
    <property type="project" value="InterPro"/>
</dbReference>
<dbReference type="GO" id="GO:0051082">
    <property type="term" value="F:unfolded protein binding"/>
    <property type="evidence" value="ECO:0007669"/>
    <property type="project" value="InterPro"/>
</dbReference>
<dbReference type="GO" id="GO:0016226">
    <property type="term" value="P:iron-sulfur cluster assembly"/>
    <property type="evidence" value="ECO:0007669"/>
    <property type="project" value="InterPro"/>
</dbReference>
<dbReference type="CDD" id="cd10236">
    <property type="entry name" value="ASKHA_NBD_HSP70_HscA"/>
    <property type="match status" value="1"/>
</dbReference>
<dbReference type="FunFam" id="3.30.420.40:FF:000046">
    <property type="entry name" value="Chaperone protein HscA"/>
    <property type="match status" value="1"/>
</dbReference>
<dbReference type="FunFam" id="2.60.34.10:FF:000005">
    <property type="entry name" value="Chaperone protein HscA homolog"/>
    <property type="match status" value="1"/>
</dbReference>
<dbReference type="FunFam" id="3.30.420.40:FF:000020">
    <property type="entry name" value="Chaperone protein HscA homolog"/>
    <property type="match status" value="1"/>
</dbReference>
<dbReference type="Gene3D" id="1.20.1270.10">
    <property type="match status" value="1"/>
</dbReference>
<dbReference type="Gene3D" id="3.30.420.40">
    <property type="match status" value="2"/>
</dbReference>
<dbReference type="Gene3D" id="3.90.640.10">
    <property type="entry name" value="Actin, Chain A, domain 4"/>
    <property type="match status" value="1"/>
</dbReference>
<dbReference type="Gene3D" id="2.60.34.10">
    <property type="entry name" value="Substrate Binding Domain Of DNAk, Chain A, domain 1"/>
    <property type="match status" value="1"/>
</dbReference>
<dbReference type="HAMAP" id="MF_00679">
    <property type="entry name" value="HscA"/>
    <property type="match status" value="1"/>
</dbReference>
<dbReference type="InterPro" id="IPR043129">
    <property type="entry name" value="ATPase_NBD"/>
</dbReference>
<dbReference type="InterPro" id="IPR018181">
    <property type="entry name" value="Heat_shock_70_CS"/>
</dbReference>
<dbReference type="InterPro" id="IPR042039">
    <property type="entry name" value="HscA_NBD"/>
</dbReference>
<dbReference type="InterPro" id="IPR029048">
    <property type="entry name" value="HSP70_C_sf"/>
</dbReference>
<dbReference type="InterPro" id="IPR029047">
    <property type="entry name" value="HSP70_peptide-bd_sf"/>
</dbReference>
<dbReference type="InterPro" id="IPR013126">
    <property type="entry name" value="Hsp_70_fam"/>
</dbReference>
<dbReference type="InterPro" id="IPR010236">
    <property type="entry name" value="ISC_FeS_clus_asmbl_HscA"/>
</dbReference>
<dbReference type="NCBIfam" id="TIGR01991">
    <property type="entry name" value="HscA"/>
    <property type="match status" value="1"/>
</dbReference>
<dbReference type="NCBIfam" id="NF003520">
    <property type="entry name" value="PRK05183.1"/>
    <property type="match status" value="1"/>
</dbReference>
<dbReference type="PANTHER" id="PTHR19375">
    <property type="entry name" value="HEAT SHOCK PROTEIN 70KDA"/>
    <property type="match status" value="1"/>
</dbReference>
<dbReference type="Pfam" id="PF00012">
    <property type="entry name" value="HSP70"/>
    <property type="match status" value="1"/>
</dbReference>
<dbReference type="PRINTS" id="PR00301">
    <property type="entry name" value="HEATSHOCK70"/>
</dbReference>
<dbReference type="SUPFAM" id="SSF53067">
    <property type="entry name" value="Actin-like ATPase domain"/>
    <property type="match status" value="2"/>
</dbReference>
<dbReference type="SUPFAM" id="SSF100934">
    <property type="entry name" value="Heat shock protein 70kD (HSP70), C-terminal subdomain"/>
    <property type="match status" value="1"/>
</dbReference>
<dbReference type="SUPFAM" id="SSF100920">
    <property type="entry name" value="Heat shock protein 70kD (HSP70), peptide-binding domain"/>
    <property type="match status" value="1"/>
</dbReference>
<dbReference type="PROSITE" id="PS00297">
    <property type="entry name" value="HSP70_1"/>
    <property type="match status" value="1"/>
</dbReference>
<dbReference type="PROSITE" id="PS00329">
    <property type="entry name" value="HSP70_2"/>
    <property type="match status" value="1"/>
</dbReference>
<dbReference type="PROSITE" id="PS01036">
    <property type="entry name" value="HSP70_3"/>
    <property type="match status" value="1"/>
</dbReference>
<accession>A3N0T5</accession>
<gene>
    <name evidence="1" type="primary">hscA</name>
    <name type="ordered locus">APL_0925</name>
</gene>
<protein>
    <recommendedName>
        <fullName evidence="1">Chaperone protein HscA homolog</fullName>
    </recommendedName>
</protein>
<name>HSCA_ACTP2</name>
<feature type="chain" id="PRO_1000044839" description="Chaperone protein HscA homolog">
    <location>
        <begin position="1"/>
        <end position="617"/>
    </location>
</feature>
<reference key="1">
    <citation type="journal article" date="2008" name="J. Bacteriol.">
        <title>The complete genome sequence of Actinobacillus pleuropneumoniae L20 (serotype 5b).</title>
        <authorList>
            <person name="Foote S.J."/>
            <person name="Bosse J.T."/>
            <person name="Bouevitch A.B."/>
            <person name="Langford P.R."/>
            <person name="Young N.M."/>
            <person name="Nash J.H.E."/>
        </authorList>
    </citation>
    <scope>NUCLEOTIDE SEQUENCE [LARGE SCALE GENOMIC DNA]</scope>
    <source>
        <strain>L20</strain>
    </source>
</reference>
<sequence>MALLQIAEPGQTAAPHQHRLAVGIDLGTTNSLVASVRSGQTQVLLDDQERALVPSVVHYGEQQKTVGIEAFAQASLDPQNTVISAKRLIGRSLADVQTRYPDLPYQFIASDNGLPLIQTKQGNKSPVEVSADILSHLNRFAEQRLGGELSGVVITVPAYFDDAQRQSTKDAARLAGLNVLRLLNEPTAAAIAYGLDSGQEGVIAVYDLGGGTFDISILRLSRGVFEVLATGGDTALGGDDFDHLLADWIAQQANYQPQNANEQRELLTLATQTKVALSQAVETEVKFANWQGTVSREQFNELIQLLVKRSLMTCRRALKDAGVEGEEIREVVMVGGSTRVPFVREQVGEFFGKQPLTSIDPDKVVALGAAIQADILVGNKPDSEMLLLDVVPLSLGIETMGGLVEKIIPRNMTIPVARAQEFTTAKDGQTAMSVHVLQGERELVEDCRSLGRFTLRGIPPMVAGAATIRVTYQVDADGLLSVTAMEKSTKVQASIQIKPSYGLTDEEVTQMIKSSMTNAKEDMEARQLAEQRVEADRTIDTVISALQQDGAEVLSVEEFKLIEAEIAKLIQLKQGTDRQAIAQGVKDLDLATQTFAAKRMNLSIQKALAGKAVDEII</sequence>
<proteinExistence type="inferred from homology"/>
<keyword id="KW-0067">ATP-binding</keyword>
<keyword id="KW-0143">Chaperone</keyword>
<keyword id="KW-0547">Nucleotide-binding</keyword>
<keyword id="KW-1185">Reference proteome</keyword>
<comment type="function">
    <text evidence="1">Chaperone involved in the maturation of iron-sulfur cluster-containing proteins. Has a low intrinsic ATPase activity which is markedly stimulated by HscB.</text>
</comment>
<comment type="similarity">
    <text evidence="1">Belongs to the heat shock protein 70 family.</text>
</comment>
<evidence type="ECO:0000255" key="1">
    <source>
        <dbReference type="HAMAP-Rule" id="MF_00679"/>
    </source>
</evidence>